<evidence type="ECO:0000255" key="1">
    <source>
        <dbReference type="HAMAP-Rule" id="MF_00003"/>
    </source>
</evidence>
<gene>
    <name evidence="1" type="primary">rbfA</name>
    <name type="ordered locus">SpyM50383</name>
</gene>
<organism>
    <name type="scientific">Streptococcus pyogenes serotype M5 (strain Manfredo)</name>
    <dbReference type="NCBI Taxonomy" id="160491"/>
    <lineage>
        <taxon>Bacteria</taxon>
        <taxon>Bacillati</taxon>
        <taxon>Bacillota</taxon>
        <taxon>Bacilli</taxon>
        <taxon>Lactobacillales</taxon>
        <taxon>Streptococcaceae</taxon>
        <taxon>Streptococcus</taxon>
    </lineage>
</organism>
<comment type="function">
    <text evidence="1">One of several proteins that assist in the late maturation steps of the functional core of the 30S ribosomal subunit. Associates with free 30S ribosomal subunits (but not with 30S subunits that are part of 70S ribosomes or polysomes). Required for efficient processing of 16S rRNA. May interact with the 5'-terminal helix region of 16S rRNA.</text>
</comment>
<comment type="subunit">
    <text evidence="1">Monomer. Binds 30S ribosomal subunits, but not 50S ribosomal subunits or 70S ribosomes.</text>
</comment>
<comment type="subcellular location">
    <subcellularLocation>
        <location evidence="1">Cytoplasm</location>
    </subcellularLocation>
</comment>
<comment type="similarity">
    <text evidence="1">Belongs to the RbfA family.</text>
</comment>
<accession>A2RD02</accession>
<sequence>MANHRIDRVGMEIKREVNDILQKKVRDPRVQGVTITEVQMQGDLSLAKVYYTIMSDLASDNQKAQTGLEKATGTIKRELGKQLTMYKIPDLVFEKDNSIAYGNKIDQLLRELDNKS</sequence>
<protein>
    <recommendedName>
        <fullName evidence="1">Ribosome-binding factor A</fullName>
    </recommendedName>
</protein>
<feature type="chain" id="PRO_1000000227" description="Ribosome-binding factor A">
    <location>
        <begin position="1"/>
        <end position="116"/>
    </location>
</feature>
<proteinExistence type="inferred from homology"/>
<name>RBFA_STRPG</name>
<keyword id="KW-0963">Cytoplasm</keyword>
<keyword id="KW-0690">Ribosome biogenesis</keyword>
<dbReference type="EMBL" id="AM295007">
    <property type="protein sequence ID" value="CAM29725.1"/>
    <property type="molecule type" value="Genomic_DNA"/>
</dbReference>
<dbReference type="RefSeq" id="WP_002988820.1">
    <property type="nucleotide sequence ID" value="NC_009332.1"/>
</dbReference>
<dbReference type="SMR" id="A2RD02"/>
<dbReference type="KEGG" id="spf:SpyM50383"/>
<dbReference type="HOGENOM" id="CLU_089475_3_0_9"/>
<dbReference type="GO" id="GO:0005829">
    <property type="term" value="C:cytosol"/>
    <property type="evidence" value="ECO:0007669"/>
    <property type="project" value="TreeGrafter"/>
</dbReference>
<dbReference type="GO" id="GO:0043024">
    <property type="term" value="F:ribosomal small subunit binding"/>
    <property type="evidence" value="ECO:0007669"/>
    <property type="project" value="TreeGrafter"/>
</dbReference>
<dbReference type="GO" id="GO:0030490">
    <property type="term" value="P:maturation of SSU-rRNA"/>
    <property type="evidence" value="ECO:0007669"/>
    <property type="project" value="UniProtKB-UniRule"/>
</dbReference>
<dbReference type="Gene3D" id="3.30.300.20">
    <property type="match status" value="1"/>
</dbReference>
<dbReference type="HAMAP" id="MF_00003">
    <property type="entry name" value="RbfA"/>
    <property type="match status" value="1"/>
</dbReference>
<dbReference type="InterPro" id="IPR015946">
    <property type="entry name" value="KH_dom-like_a/b"/>
</dbReference>
<dbReference type="InterPro" id="IPR000238">
    <property type="entry name" value="RbfA"/>
</dbReference>
<dbReference type="InterPro" id="IPR023799">
    <property type="entry name" value="RbfA_dom_sf"/>
</dbReference>
<dbReference type="InterPro" id="IPR020053">
    <property type="entry name" value="Ribosome-bd_factorA_CS"/>
</dbReference>
<dbReference type="NCBIfam" id="TIGR00082">
    <property type="entry name" value="rbfA"/>
    <property type="match status" value="1"/>
</dbReference>
<dbReference type="PANTHER" id="PTHR33515">
    <property type="entry name" value="RIBOSOME-BINDING FACTOR A, CHLOROPLASTIC-RELATED"/>
    <property type="match status" value="1"/>
</dbReference>
<dbReference type="PANTHER" id="PTHR33515:SF1">
    <property type="entry name" value="RIBOSOME-BINDING FACTOR A, CHLOROPLASTIC-RELATED"/>
    <property type="match status" value="1"/>
</dbReference>
<dbReference type="Pfam" id="PF02033">
    <property type="entry name" value="RBFA"/>
    <property type="match status" value="1"/>
</dbReference>
<dbReference type="SUPFAM" id="SSF89919">
    <property type="entry name" value="Ribosome-binding factor A, RbfA"/>
    <property type="match status" value="1"/>
</dbReference>
<dbReference type="PROSITE" id="PS01319">
    <property type="entry name" value="RBFA"/>
    <property type="match status" value="1"/>
</dbReference>
<reference key="1">
    <citation type="journal article" date="2007" name="J. Bacteriol.">
        <title>Complete genome of acute rheumatic fever-associated serotype M5 Streptococcus pyogenes strain Manfredo.</title>
        <authorList>
            <person name="Holden M.T.G."/>
            <person name="Scott A."/>
            <person name="Cherevach I."/>
            <person name="Chillingworth T."/>
            <person name="Churcher C."/>
            <person name="Cronin A."/>
            <person name="Dowd L."/>
            <person name="Feltwell T."/>
            <person name="Hamlin N."/>
            <person name="Holroyd S."/>
            <person name="Jagels K."/>
            <person name="Moule S."/>
            <person name="Mungall K."/>
            <person name="Quail M.A."/>
            <person name="Price C."/>
            <person name="Rabbinowitsch E."/>
            <person name="Sharp S."/>
            <person name="Skelton J."/>
            <person name="Whitehead S."/>
            <person name="Barrell B.G."/>
            <person name="Kehoe M."/>
            <person name="Parkhill J."/>
        </authorList>
    </citation>
    <scope>NUCLEOTIDE SEQUENCE [LARGE SCALE GENOMIC DNA]</scope>
    <source>
        <strain>Manfredo</strain>
    </source>
</reference>